<name>TPIS_ENTCL</name>
<keyword id="KW-0963">Cytoplasm</keyword>
<keyword id="KW-0312">Gluconeogenesis</keyword>
<keyword id="KW-0324">Glycolysis</keyword>
<keyword id="KW-0413">Isomerase</keyword>
<sequence length="255" mass="26914">MRHPLVMGNWKLNGSRHMVNELVANLRKELAGVTGCAVAIAPPDMYLDLAKHAADGSHIILGAQNVDVNLSGAFTGETSAEMLKDIGAKYIIIGHSERRTYHKESDEFIAKKFAVLKEQGLIPVLCIGETEAENEAGKTEEVCARQIDAVLKTQGAAAFEGAVIAYEPVWAIGTGKSATPAQAQAVHKFIRDHIAKADAKVAEQVIIQYGGSVNASNAAELFTQPDIDGALVGGASLKADAFAVIVKAAEAAKQA</sequence>
<accession>Q9Z6B9</accession>
<evidence type="ECO:0000255" key="1">
    <source>
        <dbReference type="HAMAP-Rule" id="MF_00147"/>
    </source>
</evidence>
<reference key="1">
    <citation type="journal article" date="1999" name="Appl. Environ. Microbiol.">
        <title>Role of pfkA and general carbohydrate catabolism in seed colonization by Enterobacter cloacae.</title>
        <authorList>
            <person name="Roberts D.P."/>
            <person name="Dery P.D."/>
            <person name="Yucel I."/>
            <person name="Buyer J."/>
            <person name="Holtman M.A."/>
            <person name="Kobayashi D.Y."/>
        </authorList>
    </citation>
    <scope>NUCLEOTIDE SEQUENCE [GENOMIC DNA]</scope>
    <source>
        <strain>A-11 / 501R3</strain>
    </source>
</reference>
<feature type="chain" id="PRO_0000090221" description="Triosephosphate isomerase">
    <location>
        <begin position="1"/>
        <end position="255"/>
    </location>
</feature>
<feature type="active site" description="Electrophile" evidence="1">
    <location>
        <position position="95"/>
    </location>
</feature>
<feature type="active site" description="Proton acceptor" evidence="1">
    <location>
        <position position="167"/>
    </location>
</feature>
<feature type="binding site" evidence="1">
    <location>
        <begin position="9"/>
        <end position="11"/>
    </location>
    <ligand>
        <name>substrate</name>
    </ligand>
</feature>
<feature type="binding site" evidence="1">
    <location>
        <position position="173"/>
    </location>
    <ligand>
        <name>substrate</name>
    </ligand>
</feature>
<feature type="binding site" evidence="1">
    <location>
        <position position="212"/>
    </location>
    <ligand>
        <name>substrate</name>
    </ligand>
</feature>
<feature type="binding site" evidence="1">
    <location>
        <begin position="233"/>
        <end position="234"/>
    </location>
    <ligand>
        <name>substrate</name>
    </ligand>
</feature>
<comment type="function">
    <text evidence="1">Involved in the gluconeogenesis. Catalyzes stereospecifically the conversion of dihydroxyacetone phosphate (DHAP) to D-glyceraldehyde-3-phosphate (G3P).</text>
</comment>
<comment type="catalytic activity">
    <reaction evidence="1">
        <text>D-glyceraldehyde 3-phosphate = dihydroxyacetone phosphate</text>
        <dbReference type="Rhea" id="RHEA:18585"/>
        <dbReference type="ChEBI" id="CHEBI:57642"/>
        <dbReference type="ChEBI" id="CHEBI:59776"/>
        <dbReference type="EC" id="5.3.1.1"/>
    </reaction>
</comment>
<comment type="pathway">
    <text evidence="1">Carbohydrate biosynthesis; gluconeogenesis.</text>
</comment>
<comment type="pathway">
    <text evidence="1">Carbohydrate degradation; glycolysis; D-glyceraldehyde 3-phosphate from glycerone phosphate: step 1/1.</text>
</comment>
<comment type="subunit">
    <text evidence="1">Homodimer.</text>
</comment>
<comment type="subcellular location">
    <subcellularLocation>
        <location evidence="1">Cytoplasm</location>
    </subcellularLocation>
</comment>
<comment type="similarity">
    <text evidence="1">Belongs to the triosephosphate isomerase family.</text>
</comment>
<proteinExistence type="inferred from homology"/>
<gene>
    <name evidence="1" type="primary">tpiA</name>
    <name type="synonym">tpi</name>
</gene>
<organism>
    <name type="scientific">Enterobacter cloacae</name>
    <dbReference type="NCBI Taxonomy" id="550"/>
    <lineage>
        <taxon>Bacteria</taxon>
        <taxon>Pseudomonadati</taxon>
        <taxon>Pseudomonadota</taxon>
        <taxon>Gammaproteobacteria</taxon>
        <taxon>Enterobacterales</taxon>
        <taxon>Enterobacteriaceae</taxon>
        <taxon>Enterobacter</taxon>
        <taxon>Enterobacter cloacae complex</taxon>
    </lineage>
</organism>
<dbReference type="EC" id="5.3.1.1" evidence="1"/>
<dbReference type="EMBL" id="AF098509">
    <property type="protein sequence ID" value="AAD16183.1"/>
    <property type="molecule type" value="Genomic_DNA"/>
</dbReference>
<dbReference type="RefSeq" id="WP_014172206.1">
    <property type="nucleotide sequence ID" value="NZ_QJSL01000021.1"/>
</dbReference>
<dbReference type="SMR" id="Q9Z6B9"/>
<dbReference type="GeneID" id="75135914"/>
<dbReference type="eggNOG" id="COG0149">
    <property type="taxonomic scope" value="Bacteria"/>
</dbReference>
<dbReference type="OrthoDB" id="9809429at2"/>
<dbReference type="UniPathway" id="UPA00109">
    <property type="reaction ID" value="UER00189"/>
</dbReference>
<dbReference type="UniPathway" id="UPA00138"/>
<dbReference type="GO" id="GO:0005829">
    <property type="term" value="C:cytosol"/>
    <property type="evidence" value="ECO:0007669"/>
    <property type="project" value="TreeGrafter"/>
</dbReference>
<dbReference type="GO" id="GO:0004807">
    <property type="term" value="F:triose-phosphate isomerase activity"/>
    <property type="evidence" value="ECO:0007669"/>
    <property type="project" value="UniProtKB-UniRule"/>
</dbReference>
<dbReference type="GO" id="GO:0006094">
    <property type="term" value="P:gluconeogenesis"/>
    <property type="evidence" value="ECO:0007669"/>
    <property type="project" value="UniProtKB-UniRule"/>
</dbReference>
<dbReference type="GO" id="GO:0046166">
    <property type="term" value="P:glyceraldehyde-3-phosphate biosynthetic process"/>
    <property type="evidence" value="ECO:0007669"/>
    <property type="project" value="TreeGrafter"/>
</dbReference>
<dbReference type="GO" id="GO:0019563">
    <property type="term" value="P:glycerol catabolic process"/>
    <property type="evidence" value="ECO:0007669"/>
    <property type="project" value="TreeGrafter"/>
</dbReference>
<dbReference type="GO" id="GO:0006096">
    <property type="term" value="P:glycolytic process"/>
    <property type="evidence" value="ECO:0007669"/>
    <property type="project" value="UniProtKB-UniRule"/>
</dbReference>
<dbReference type="CDD" id="cd00311">
    <property type="entry name" value="TIM"/>
    <property type="match status" value="1"/>
</dbReference>
<dbReference type="FunFam" id="3.20.20.70:FF:000020">
    <property type="entry name" value="Triosephosphate isomerase"/>
    <property type="match status" value="1"/>
</dbReference>
<dbReference type="Gene3D" id="3.20.20.70">
    <property type="entry name" value="Aldolase class I"/>
    <property type="match status" value="1"/>
</dbReference>
<dbReference type="HAMAP" id="MF_00147_B">
    <property type="entry name" value="TIM_B"/>
    <property type="match status" value="1"/>
</dbReference>
<dbReference type="InterPro" id="IPR013785">
    <property type="entry name" value="Aldolase_TIM"/>
</dbReference>
<dbReference type="InterPro" id="IPR035990">
    <property type="entry name" value="TIM_sf"/>
</dbReference>
<dbReference type="InterPro" id="IPR022896">
    <property type="entry name" value="TrioseP_Isoase_bac/euk"/>
</dbReference>
<dbReference type="InterPro" id="IPR000652">
    <property type="entry name" value="Triosephosphate_isomerase"/>
</dbReference>
<dbReference type="InterPro" id="IPR020861">
    <property type="entry name" value="Triosephosphate_isomerase_AS"/>
</dbReference>
<dbReference type="NCBIfam" id="TIGR00419">
    <property type="entry name" value="tim"/>
    <property type="match status" value="1"/>
</dbReference>
<dbReference type="PANTHER" id="PTHR21139">
    <property type="entry name" value="TRIOSEPHOSPHATE ISOMERASE"/>
    <property type="match status" value="1"/>
</dbReference>
<dbReference type="PANTHER" id="PTHR21139:SF42">
    <property type="entry name" value="TRIOSEPHOSPHATE ISOMERASE"/>
    <property type="match status" value="1"/>
</dbReference>
<dbReference type="Pfam" id="PF00121">
    <property type="entry name" value="TIM"/>
    <property type="match status" value="1"/>
</dbReference>
<dbReference type="SUPFAM" id="SSF51351">
    <property type="entry name" value="Triosephosphate isomerase (TIM)"/>
    <property type="match status" value="1"/>
</dbReference>
<dbReference type="PROSITE" id="PS00171">
    <property type="entry name" value="TIM_1"/>
    <property type="match status" value="1"/>
</dbReference>
<dbReference type="PROSITE" id="PS51440">
    <property type="entry name" value="TIM_2"/>
    <property type="match status" value="1"/>
</dbReference>
<protein>
    <recommendedName>
        <fullName evidence="1">Triosephosphate isomerase</fullName>
        <shortName evidence="1">TIM</shortName>
        <shortName evidence="1">TPI</shortName>
        <ecNumber evidence="1">5.3.1.1</ecNumber>
    </recommendedName>
    <alternativeName>
        <fullName evidence="1">Triose-phosphate isomerase</fullName>
    </alternativeName>
</protein>